<gene>
    <name evidence="5" type="primary">SAC3B</name>
    <name evidence="7" type="ordered locus">At3g06290</name>
    <name evidence="8" type="ORF">F28L1.23</name>
</gene>
<comment type="function">
    <text evidence="3">Component of the TREX-2 complex (transcription and export complex 2), a muliprotein complex that functions in docking export-competent ribonucleoprotein particles (mRNPs) to the nuclear entrance of the nuclear pore complex (nuclear basket). TREX-2 participates in mRNA export and accurate chromatin positioning in the nucleus by tethering genes to the nuclear periphery (PubMed:19843313).</text>
</comment>
<comment type="subunit">
    <text evidence="3 4">Interacts with SAC3A, EER5 and CML19 (PubMed:19843313). Interacts with UCH1 and UCH2 (PubMed:22951400).</text>
</comment>
<comment type="subcellular location">
    <subcellularLocation>
        <location evidence="3">Nucleus</location>
    </subcellularLocation>
    <text evidence="3">Apparent concentration to the nuclear periphery.</text>
</comment>
<comment type="disruption phenotype">
    <text evidence="3">No visible phenotype. Sac3a, sac3b and sac3c triple mutants show no visible phenotype.</text>
</comment>
<comment type="similarity">
    <text evidence="6">Belongs to the SAC3 family.</text>
</comment>
<comment type="sequence caution" evidence="6">
    <conflict type="erroneous gene model prediction">
        <sequence resource="EMBL-CDS" id="AAF30322"/>
    </conflict>
</comment>
<organism evidence="9">
    <name type="scientific">Arabidopsis thaliana</name>
    <name type="common">Mouse-ear cress</name>
    <dbReference type="NCBI Taxonomy" id="3702"/>
    <lineage>
        <taxon>Eukaryota</taxon>
        <taxon>Viridiplantae</taxon>
        <taxon>Streptophyta</taxon>
        <taxon>Embryophyta</taxon>
        <taxon>Tracheophyta</taxon>
        <taxon>Spermatophyta</taxon>
        <taxon>Magnoliopsida</taxon>
        <taxon>eudicotyledons</taxon>
        <taxon>Gunneridae</taxon>
        <taxon>Pentapetalae</taxon>
        <taxon>rosids</taxon>
        <taxon>malvids</taxon>
        <taxon>Brassicales</taxon>
        <taxon>Brassicaceae</taxon>
        <taxon>Camelineae</taxon>
        <taxon>Arabidopsis</taxon>
    </lineage>
</organism>
<dbReference type="EMBL" id="AC018907">
    <property type="protein sequence ID" value="AAF30322.1"/>
    <property type="status" value="ALT_SEQ"/>
    <property type="molecule type" value="Genomic_DNA"/>
</dbReference>
<dbReference type="EMBL" id="CP002686">
    <property type="protein sequence ID" value="AEE74369.1"/>
    <property type="molecule type" value="Genomic_DNA"/>
</dbReference>
<dbReference type="RefSeq" id="NP_187280.3">
    <property type="nucleotide sequence ID" value="NM_111504.3"/>
</dbReference>
<dbReference type="SMR" id="F4JAU2"/>
<dbReference type="FunCoup" id="F4JAU2">
    <property type="interactions" value="3922"/>
</dbReference>
<dbReference type="IntAct" id="F4JAU2">
    <property type="interactions" value="4"/>
</dbReference>
<dbReference type="STRING" id="3702.F4JAU2"/>
<dbReference type="GlyGen" id="F4JAU2">
    <property type="glycosylation" value="2 sites, 1 O-linked glycan (1 site)"/>
</dbReference>
<dbReference type="iPTMnet" id="F4JAU2"/>
<dbReference type="PaxDb" id="3702-AT3G06290.1"/>
<dbReference type="ProteomicsDB" id="232835"/>
<dbReference type="EnsemblPlants" id="AT3G06290.1">
    <property type="protein sequence ID" value="AT3G06290.1"/>
    <property type="gene ID" value="AT3G06290"/>
</dbReference>
<dbReference type="GeneID" id="819803"/>
<dbReference type="Gramene" id="AT3G06290.1">
    <property type="protein sequence ID" value="AT3G06290.1"/>
    <property type="gene ID" value="AT3G06290"/>
</dbReference>
<dbReference type="KEGG" id="ath:AT3G06290"/>
<dbReference type="Araport" id="AT3G06290"/>
<dbReference type="TAIR" id="AT3G06290">
    <property type="gene designation" value="SAC3B"/>
</dbReference>
<dbReference type="eggNOG" id="KOG1860">
    <property type="taxonomic scope" value="Eukaryota"/>
</dbReference>
<dbReference type="HOGENOM" id="CLU_003928_0_0_1"/>
<dbReference type="InParanoid" id="F4JAU2"/>
<dbReference type="PRO" id="PR:F4JAU2"/>
<dbReference type="Proteomes" id="UP000006548">
    <property type="component" value="Chromosome 3"/>
</dbReference>
<dbReference type="ExpressionAtlas" id="F4JAU2">
    <property type="expression patterns" value="baseline and differential"/>
</dbReference>
<dbReference type="GO" id="GO:0034399">
    <property type="term" value="C:nuclear periphery"/>
    <property type="evidence" value="ECO:0000314"/>
    <property type="project" value="TAIR"/>
</dbReference>
<dbReference type="FunFam" id="1.25.40.990:FF:000004">
    <property type="entry name" value="Putative peptidase C48 domain family protein"/>
    <property type="match status" value="1"/>
</dbReference>
<dbReference type="Gene3D" id="1.25.40.990">
    <property type="match status" value="1"/>
</dbReference>
<dbReference type="InterPro" id="IPR031907">
    <property type="entry name" value="MCM3AP_GANP"/>
</dbReference>
<dbReference type="InterPro" id="IPR000717">
    <property type="entry name" value="PCI_dom"/>
</dbReference>
<dbReference type="InterPro" id="IPR045107">
    <property type="entry name" value="SAC3/GANP/THP3"/>
</dbReference>
<dbReference type="InterPro" id="IPR005062">
    <property type="entry name" value="SAC3/GANP/THP3_conserved"/>
</dbReference>
<dbReference type="PANTHER" id="PTHR12436">
    <property type="entry name" value="80 KDA MCM3-ASSOCIATED PROTEIN"/>
    <property type="match status" value="1"/>
</dbReference>
<dbReference type="PANTHER" id="PTHR12436:SF17">
    <property type="entry name" value="SAC3 FAMILY PROTEIN B"/>
    <property type="match status" value="1"/>
</dbReference>
<dbReference type="Pfam" id="PF16769">
    <property type="entry name" value="MCM3AP_GANP"/>
    <property type="match status" value="1"/>
</dbReference>
<dbReference type="Pfam" id="PF03399">
    <property type="entry name" value="SAC3_GANP"/>
    <property type="match status" value="1"/>
</dbReference>
<dbReference type="PROSITE" id="PS50250">
    <property type="entry name" value="PCI"/>
    <property type="match status" value="1"/>
</dbReference>
<protein>
    <recommendedName>
        <fullName evidence="5">SAC3 family protein B</fullName>
    </recommendedName>
</protein>
<proteinExistence type="evidence at protein level"/>
<reference key="1">
    <citation type="journal article" date="2000" name="Nature">
        <title>Sequence and analysis of chromosome 3 of the plant Arabidopsis thaliana.</title>
        <authorList>
            <person name="Salanoubat M."/>
            <person name="Lemcke K."/>
            <person name="Rieger M."/>
            <person name="Ansorge W."/>
            <person name="Unseld M."/>
            <person name="Fartmann B."/>
            <person name="Valle G."/>
            <person name="Bloecker H."/>
            <person name="Perez-Alonso M."/>
            <person name="Obermaier B."/>
            <person name="Delseny M."/>
            <person name="Boutry M."/>
            <person name="Grivell L.A."/>
            <person name="Mache R."/>
            <person name="Puigdomenech P."/>
            <person name="De Simone V."/>
            <person name="Choisne N."/>
            <person name="Artiguenave F."/>
            <person name="Robert C."/>
            <person name="Brottier P."/>
            <person name="Wincker P."/>
            <person name="Cattolico L."/>
            <person name="Weissenbach J."/>
            <person name="Saurin W."/>
            <person name="Quetier F."/>
            <person name="Schaefer M."/>
            <person name="Mueller-Auer S."/>
            <person name="Gabel C."/>
            <person name="Fuchs M."/>
            <person name="Benes V."/>
            <person name="Wurmbach E."/>
            <person name="Drzonek H."/>
            <person name="Erfle H."/>
            <person name="Jordan N."/>
            <person name="Bangert S."/>
            <person name="Wiedelmann R."/>
            <person name="Kranz H."/>
            <person name="Voss H."/>
            <person name="Holland R."/>
            <person name="Brandt P."/>
            <person name="Nyakatura G."/>
            <person name="Vezzi A."/>
            <person name="D'Angelo M."/>
            <person name="Pallavicini A."/>
            <person name="Toppo S."/>
            <person name="Simionati B."/>
            <person name="Conrad A."/>
            <person name="Hornischer K."/>
            <person name="Kauer G."/>
            <person name="Loehnert T.-H."/>
            <person name="Nordsiek G."/>
            <person name="Reichelt J."/>
            <person name="Scharfe M."/>
            <person name="Schoen O."/>
            <person name="Bargues M."/>
            <person name="Terol J."/>
            <person name="Climent J."/>
            <person name="Navarro P."/>
            <person name="Collado C."/>
            <person name="Perez-Perez A."/>
            <person name="Ottenwaelder B."/>
            <person name="Duchemin D."/>
            <person name="Cooke R."/>
            <person name="Laudie M."/>
            <person name="Berger-Llauro C."/>
            <person name="Purnelle B."/>
            <person name="Masuy D."/>
            <person name="de Haan M."/>
            <person name="Maarse A.C."/>
            <person name="Alcaraz J.-P."/>
            <person name="Cottet A."/>
            <person name="Casacuberta E."/>
            <person name="Monfort A."/>
            <person name="Argiriou A."/>
            <person name="Flores M."/>
            <person name="Liguori R."/>
            <person name="Vitale D."/>
            <person name="Mannhaupt G."/>
            <person name="Haase D."/>
            <person name="Schoof H."/>
            <person name="Rudd S."/>
            <person name="Zaccaria P."/>
            <person name="Mewes H.-W."/>
            <person name="Mayer K.F.X."/>
            <person name="Kaul S."/>
            <person name="Town C.D."/>
            <person name="Koo H.L."/>
            <person name="Tallon L.J."/>
            <person name="Jenkins J."/>
            <person name="Rooney T."/>
            <person name="Rizzo M."/>
            <person name="Walts A."/>
            <person name="Utterback T."/>
            <person name="Fujii C.Y."/>
            <person name="Shea T.P."/>
            <person name="Creasy T.H."/>
            <person name="Haas B."/>
            <person name="Maiti R."/>
            <person name="Wu D."/>
            <person name="Peterson J."/>
            <person name="Van Aken S."/>
            <person name="Pai G."/>
            <person name="Militscher J."/>
            <person name="Sellers P."/>
            <person name="Gill J.E."/>
            <person name="Feldblyum T.V."/>
            <person name="Preuss D."/>
            <person name="Lin X."/>
            <person name="Nierman W.C."/>
            <person name="Salzberg S.L."/>
            <person name="White O."/>
            <person name="Venter J.C."/>
            <person name="Fraser C.M."/>
            <person name="Kaneko T."/>
            <person name="Nakamura Y."/>
            <person name="Sato S."/>
            <person name="Kato T."/>
            <person name="Asamizu E."/>
            <person name="Sasamoto S."/>
            <person name="Kimura T."/>
            <person name="Idesawa K."/>
            <person name="Kawashima K."/>
            <person name="Kishida Y."/>
            <person name="Kiyokawa C."/>
            <person name="Kohara M."/>
            <person name="Matsumoto M."/>
            <person name="Matsuno A."/>
            <person name="Muraki A."/>
            <person name="Nakayama S."/>
            <person name="Nakazaki N."/>
            <person name="Shinpo S."/>
            <person name="Takeuchi C."/>
            <person name="Wada T."/>
            <person name="Watanabe A."/>
            <person name="Yamada M."/>
            <person name="Yasuda M."/>
            <person name="Tabata S."/>
        </authorList>
    </citation>
    <scope>NUCLEOTIDE SEQUENCE [LARGE SCALE GENOMIC DNA]</scope>
    <source>
        <strain>cv. Columbia</strain>
    </source>
</reference>
<reference key="2">
    <citation type="journal article" date="2017" name="Plant J.">
        <title>Araport11: a complete reannotation of the Arabidopsis thaliana reference genome.</title>
        <authorList>
            <person name="Cheng C.Y."/>
            <person name="Krishnakumar V."/>
            <person name="Chan A.P."/>
            <person name="Thibaud-Nissen F."/>
            <person name="Schobel S."/>
            <person name="Town C.D."/>
        </authorList>
    </citation>
    <scope>GENOME REANNOTATION</scope>
    <source>
        <strain evidence="9">cv. Columbia</strain>
    </source>
</reference>
<reference key="3">
    <citation type="journal article" date="2010" name="Plant J.">
        <title>Arabidopsis homolog of the yeast TREX-2 mRNA export complex: components and anchoring nucleoporin.</title>
        <authorList>
            <person name="Lu Q."/>
            <person name="Tang X."/>
            <person name="Tian G."/>
            <person name="Wang F."/>
            <person name="Liu K."/>
            <person name="Nguyen V."/>
            <person name="Kohalmi S.E."/>
            <person name="Keller W.A."/>
            <person name="Tsang E.W."/>
            <person name="Harada J.J."/>
            <person name="Rothstein S.J."/>
            <person name="Cui Y."/>
        </authorList>
    </citation>
    <scope>INTERACTION WITH EER5; SAC3A AND CML19</scope>
    <scope>SUBCELLULAR LOCATION</scope>
    <scope>DISRUPTION PHENOTYPE</scope>
    <scope>FUNCTION</scope>
</reference>
<reference key="4">
    <citation type="journal article" date="2012" name="Plant Signal. Behav.">
        <title>Evidence that the Arabidopsis Ubiquitin C-terminal Hydrolases 1 and 2 associate with the 26S proteasome and the TREX-2 complex.</title>
        <authorList>
            <person name="Tian G."/>
            <person name="Lu Q."/>
            <person name="Kohalmi S.E."/>
            <person name="Rothstein S.J."/>
            <person name="Cui Y."/>
        </authorList>
    </citation>
    <scope>INTERACTION WITH UCH1 AND UCH2</scope>
</reference>
<accession>F4JAU2</accession>
<accession>Q9M8I9</accession>
<feature type="chain" id="PRO_0000435404" description="SAC3 family protein B">
    <location>
        <begin position="1"/>
        <end position="1697"/>
    </location>
</feature>
<feature type="domain" description="PCI" evidence="1">
    <location>
        <begin position="625"/>
        <end position="813"/>
    </location>
</feature>
<feature type="region of interest" description="Disordered" evidence="2">
    <location>
        <begin position="54"/>
        <end position="134"/>
    </location>
</feature>
<feature type="region of interest" description="Disordered" evidence="2">
    <location>
        <begin position="167"/>
        <end position="280"/>
    </location>
</feature>
<feature type="region of interest" description="Disordered" evidence="2">
    <location>
        <begin position="306"/>
        <end position="413"/>
    </location>
</feature>
<feature type="region of interest" description="Disordered" evidence="2">
    <location>
        <begin position="491"/>
        <end position="512"/>
    </location>
</feature>
<feature type="compositionally biased region" description="Low complexity" evidence="2">
    <location>
        <begin position="120"/>
        <end position="134"/>
    </location>
</feature>
<feature type="compositionally biased region" description="Basic and acidic residues" evidence="2">
    <location>
        <begin position="178"/>
        <end position="192"/>
    </location>
</feature>
<feature type="compositionally biased region" description="Polar residues" evidence="2">
    <location>
        <begin position="193"/>
        <end position="202"/>
    </location>
</feature>
<feature type="compositionally biased region" description="Basic and acidic residues" evidence="2">
    <location>
        <begin position="215"/>
        <end position="227"/>
    </location>
</feature>
<feature type="compositionally biased region" description="Polar residues" evidence="2">
    <location>
        <begin position="233"/>
        <end position="243"/>
    </location>
</feature>
<feature type="compositionally biased region" description="Polar residues" evidence="2">
    <location>
        <begin position="257"/>
        <end position="280"/>
    </location>
</feature>
<feature type="compositionally biased region" description="Polar residues" evidence="2">
    <location>
        <begin position="335"/>
        <end position="380"/>
    </location>
</feature>
<name>SAC3B_ARATH</name>
<evidence type="ECO:0000255" key="1">
    <source>
        <dbReference type="PROSITE-ProRule" id="PRU01185"/>
    </source>
</evidence>
<evidence type="ECO:0000256" key="2">
    <source>
        <dbReference type="SAM" id="MobiDB-lite"/>
    </source>
</evidence>
<evidence type="ECO:0000269" key="3">
    <source>
    </source>
</evidence>
<evidence type="ECO:0000269" key="4">
    <source>
    </source>
</evidence>
<evidence type="ECO:0000303" key="5">
    <source>
    </source>
</evidence>
<evidence type="ECO:0000305" key="6"/>
<evidence type="ECO:0000312" key="7">
    <source>
        <dbReference type="Araport" id="AT3G06290"/>
    </source>
</evidence>
<evidence type="ECO:0000312" key="8">
    <source>
        <dbReference type="EMBL" id="AAF30322.1"/>
    </source>
</evidence>
<evidence type="ECO:0000312" key="9">
    <source>
        <dbReference type="Proteomes" id="UP000006548"/>
    </source>
</evidence>
<sequence length="1697" mass="189932">MAFRPFGKDLGPMSSKPAPFTPFGASSTTRLYLSFLFLHTANVGFACSDSSIQPPASQNHSAFAGQSFGPGGIRSGPSIQRAPPLSASQNPQLSIGKPYRPGGVQSVPPINRIPSPSAFQNPSPSSGQPYQPGGIQRIPEPFNGIAWGPEASRTSPSVRPYQFPGVQRPNLNPQYGHDGSRNFLKDHGEHSRATSPPATSHILSRMGTDAVEIGRSQDSKRKSRSDILPDQNMGFSRRNQSPVSGFENGNLVDGFQPLSSRTWMRSPSSAENNPVRSRSNPNQLIHQEQTGNSSFPYAHEVAEIQEATRRKSSAVAPSDKPLGDDPILSQHDSQRFSTSPPTSGTKSYTLSRSSDSQFPGQPSSVNSFNNARKTNSSPATKRTRSPPVYPIEEDIPRNSFPSQDCTEGEEQARAKRLARFKGELEPIADRPVDIQLTKSPVNKTMKPLDNKQTFNSLESSRDALKGDALPDYENSEQPSLIIGVCPDMCPESERGERERKGDLDHYERVDGDRNQTSKSLAVKKYTRTAEREAILIRPMPILQNTMEYLLSLLDRPYNENFLGMYNFLWDRMRAIRMDLRMQHIFNQEAITLLEQMIRLHIIAMHELCEYTKGEGFSEGFDAHLNIEQMNKTSVELFQMYDDHRKKGITVPTEKEFRGYYALLKLDKHPGYKVEPSELSLDLANMTPEIRQTSEVLFARNVARACRTGNFIAFFRLARKASYLQACLMHAHFSKLRTQALASLHSGLQINQGLPVSDMSNWIGMEEEDIEALLEYHGFSIKVFEEPYMVKNDLFLHADKDYKTKCSKLVHMKKSRTIVEDVSAPTVVEDVSTPFPLPSLITEATIGNQQCITAHKHEMPPARSLKKQTSMRLFDKEVADSKTSLLAEEDKPMGTFVMNPPGPFVINPVVHQEKQNDLTSAGGFHSPVKLYSPFGSPKFPQTKSSNLEKQPNDDRIGMSPGEIKFSIIGDVYTNHVPGPALQQSPKSMPMEIMPVTTIAECPTSVENKYALEESVPEAAMICTLEKEFNDIDEEDEDEDGVILNQYDEEVAKAKLKLIIRLWKRWSSRQSELRERRQLAAAAALNSLSLGTPIRFSKTDQSRACGEFNIDQAMRRRFEEREKSWSRLNISDVIADILVGRNPESKCISWKVVLCTQTKSVNSSSSASQVTHSAASRWLSSKLMPHAEHSSLNDDNLLFSAPGVSVWNKWVANGSDIDFTCCLSVARDVEAENDMCETTCGASAVLFLASGGLPLNLQREQLNLILESVPNGSVLPLLVVISSCNGEHMEPDTDIVSGLGLHDIDKSKIASFSIVSIANKSQKGQEVHFFNDSRLRDGFKWLASNSPLQPNLHHVKLRELFLTHFSFSLELLKQMPDQEVGPNICISAFNDALETSRRNITSAAEANPIGWPCPETMLLEDNRKECLMVKRYLPNLDWSSAENVELLSSVLENCKLPDFEDDLTWLTVGCASGAEIENHTQRLEGCLIEYLTQRSNLMGVSLATKETGVMLERNTRLELHNSSRYHITPRWIGIFQRIFNWRIMGLFDASSSSAYVLKSDLNMSTSSYADKFLAEDASYPSCPPNLPLLHEMIEISCSPLKSPPPYDDKAQRVVETGMLIDDHRDIEESMLEKNREACRGIDLMITEDDELGERSWRSKGREAAEKKTIEKRESERLDELLEKCNMVQNSIAEKLCIYF</sequence>
<keyword id="KW-0539">Nucleus</keyword>
<keyword id="KW-1185">Reference proteome</keyword>